<gene>
    <name type="primary">FLA10</name>
    <name type="ordered locus">At3g60900</name>
    <name type="ORF">T4C21.310</name>
</gene>
<name>FLA10_ARATH</name>
<accession>Q9LZX4</accession>
<accession>Q94JM1</accession>
<dbReference type="EMBL" id="AL162295">
    <property type="protein sequence ID" value="CAB82694.1"/>
    <property type="molecule type" value="Genomic_DNA"/>
</dbReference>
<dbReference type="EMBL" id="CP002686">
    <property type="protein sequence ID" value="AEE80125.1"/>
    <property type="molecule type" value="Genomic_DNA"/>
</dbReference>
<dbReference type="EMBL" id="AY087634">
    <property type="protein sequence ID" value="AAM65173.1"/>
    <property type="molecule type" value="mRNA"/>
</dbReference>
<dbReference type="EMBL" id="AF378882">
    <property type="protein sequence ID" value="AAK55685.1"/>
    <property type="molecule type" value="mRNA"/>
</dbReference>
<dbReference type="PIR" id="T47901">
    <property type="entry name" value="T47901"/>
</dbReference>
<dbReference type="RefSeq" id="NP_191649.1">
    <property type="nucleotide sequence ID" value="NM_115954.3"/>
</dbReference>
<dbReference type="SMR" id="Q9LZX4"/>
<dbReference type="FunCoup" id="Q9LZX4">
    <property type="interactions" value="21"/>
</dbReference>
<dbReference type="STRING" id="3702.Q9LZX4"/>
<dbReference type="GlyCosmos" id="Q9LZX4">
    <property type="glycosylation" value="5 sites, No reported glycans"/>
</dbReference>
<dbReference type="GlyGen" id="Q9LZX4">
    <property type="glycosylation" value="8 sites"/>
</dbReference>
<dbReference type="SwissPalm" id="Q9LZX4"/>
<dbReference type="PaxDb" id="3702-AT3G60900.1"/>
<dbReference type="ProteomicsDB" id="230586"/>
<dbReference type="EnsemblPlants" id="AT3G60900.1">
    <property type="protein sequence ID" value="AT3G60900.1"/>
    <property type="gene ID" value="AT3G60900"/>
</dbReference>
<dbReference type="GeneID" id="825261"/>
<dbReference type="Gramene" id="AT3G60900.1">
    <property type="protein sequence ID" value="AT3G60900.1"/>
    <property type="gene ID" value="AT3G60900"/>
</dbReference>
<dbReference type="KEGG" id="ath:AT3G60900"/>
<dbReference type="Araport" id="AT3G60900"/>
<dbReference type="TAIR" id="AT3G60900">
    <property type="gene designation" value="FLA10"/>
</dbReference>
<dbReference type="eggNOG" id="ENOG502QV96">
    <property type="taxonomic scope" value="Eukaryota"/>
</dbReference>
<dbReference type="HOGENOM" id="CLU_036139_0_0_1"/>
<dbReference type="InParanoid" id="Q9LZX4"/>
<dbReference type="OMA" id="YYDPTKL"/>
<dbReference type="PhylomeDB" id="Q9LZX4"/>
<dbReference type="PRO" id="PR:Q9LZX4"/>
<dbReference type="Proteomes" id="UP000006548">
    <property type="component" value="Chromosome 3"/>
</dbReference>
<dbReference type="ExpressionAtlas" id="Q9LZX4">
    <property type="expression patterns" value="baseline and differential"/>
</dbReference>
<dbReference type="GO" id="GO:0005829">
    <property type="term" value="C:cytosol"/>
    <property type="evidence" value="ECO:0007005"/>
    <property type="project" value="TAIR"/>
</dbReference>
<dbReference type="GO" id="GO:0005886">
    <property type="term" value="C:plasma membrane"/>
    <property type="evidence" value="ECO:0007005"/>
    <property type="project" value="TAIR"/>
</dbReference>
<dbReference type="GO" id="GO:0099503">
    <property type="term" value="C:secretory vesicle"/>
    <property type="evidence" value="ECO:0007005"/>
    <property type="project" value="TAIR"/>
</dbReference>
<dbReference type="GO" id="GO:0098552">
    <property type="term" value="C:side of membrane"/>
    <property type="evidence" value="ECO:0007669"/>
    <property type="project" value="UniProtKB-KW"/>
</dbReference>
<dbReference type="FunFam" id="2.30.180.10:FF:000008">
    <property type="entry name" value="Fasciclin-like arabinogalactan protein 10"/>
    <property type="match status" value="1"/>
</dbReference>
<dbReference type="FunFam" id="2.30.180.10:FF:000010">
    <property type="entry name" value="Fasciclin-like arabinogalactan protein 2"/>
    <property type="match status" value="1"/>
</dbReference>
<dbReference type="Gene3D" id="2.30.180.10">
    <property type="entry name" value="FAS1 domain"/>
    <property type="match status" value="2"/>
</dbReference>
<dbReference type="InterPro" id="IPR036378">
    <property type="entry name" value="FAS1_dom_sf"/>
</dbReference>
<dbReference type="InterPro" id="IPR000782">
    <property type="entry name" value="FAS1_domain"/>
</dbReference>
<dbReference type="InterPro" id="IPR033254">
    <property type="entry name" value="Plant_FLA"/>
</dbReference>
<dbReference type="PANTHER" id="PTHR32382">
    <property type="entry name" value="FASCICLIN-LIKE ARABINOGALACTAN PROTEIN"/>
    <property type="match status" value="1"/>
</dbReference>
<dbReference type="PANTHER" id="PTHR32382:SF71">
    <property type="entry name" value="FASCICLIN-LIKE ARABINOGALACTAN PROTEIN 10"/>
    <property type="match status" value="1"/>
</dbReference>
<dbReference type="Pfam" id="PF02469">
    <property type="entry name" value="Fasciclin"/>
    <property type="match status" value="1"/>
</dbReference>
<dbReference type="SMART" id="SM00554">
    <property type="entry name" value="FAS1"/>
    <property type="match status" value="1"/>
</dbReference>
<dbReference type="SUPFAM" id="SSF82153">
    <property type="entry name" value="FAS1 domain"/>
    <property type="match status" value="2"/>
</dbReference>
<dbReference type="PROSITE" id="PS50213">
    <property type="entry name" value="FAS1"/>
    <property type="match status" value="2"/>
</dbReference>
<evidence type="ECO:0000255" key="1"/>
<evidence type="ECO:0000255" key="2">
    <source>
        <dbReference type="PROSITE-ProRule" id="PRU00082"/>
    </source>
</evidence>
<evidence type="ECO:0000256" key="3">
    <source>
        <dbReference type="SAM" id="MobiDB-lite"/>
    </source>
</evidence>
<evidence type="ECO:0000305" key="4"/>
<feature type="signal peptide" evidence="1">
    <location>
        <begin position="1"/>
        <end position="25"/>
    </location>
</feature>
<feature type="chain" id="PRO_0000008782" description="Fasciclin-like arabinogalactan protein 10">
    <location>
        <begin position="26"/>
        <end position="398"/>
    </location>
</feature>
<feature type="propeptide" id="PRO_0000008783" description="Removed in mature form" evidence="1">
    <location>
        <begin position="399"/>
        <end position="422"/>
    </location>
</feature>
<feature type="domain" description="FAS1 1" evidence="2">
    <location>
        <begin position="26"/>
        <end position="172"/>
    </location>
</feature>
<feature type="domain" description="FAS1 2" evidence="2">
    <location>
        <begin position="187"/>
        <end position="327"/>
    </location>
</feature>
<feature type="region of interest" description="Disordered" evidence="3">
    <location>
        <begin position="336"/>
        <end position="397"/>
    </location>
</feature>
<feature type="compositionally biased region" description="Pro residues" evidence="3">
    <location>
        <begin position="340"/>
        <end position="374"/>
    </location>
</feature>
<feature type="compositionally biased region" description="Polar residues" evidence="3">
    <location>
        <begin position="386"/>
        <end position="397"/>
    </location>
</feature>
<feature type="lipid moiety-binding region" description="GPI-anchor amidated asparagine" evidence="1">
    <location>
        <position position="398"/>
    </location>
</feature>
<feature type="glycosylation site" description="N-linked (GlcNAc...) asparagine" evidence="1">
    <location>
        <position position="27"/>
    </location>
</feature>
<feature type="glycosylation site" description="N-linked (GlcNAc...) asparagine" evidence="1">
    <location>
        <position position="128"/>
    </location>
</feature>
<feature type="glycosylation site" description="N-linked (GlcNAc...) asparagine" evidence="1">
    <location>
        <position position="162"/>
    </location>
</feature>
<feature type="glycosylation site" description="N-linked (GlcNAc...) asparagine" evidence="1">
    <location>
        <position position="190"/>
    </location>
</feature>
<feature type="glycosylation site" description="N-linked (GlcNAc...) asparagine" evidence="1">
    <location>
        <position position="244"/>
    </location>
</feature>
<sequence length="422" mass="43607">MATSRAFTLFAFTLSLLTVASTVSGHNITQILSDTPEYSSFNNYLSQTKLADEINSRTTITVLVLNNGAMSSLAGKHPLSVVKNALSLLVLLDYYDPLKLHQLSKGTTLTTTLYQTTGHALGNLGFVNVTDLKGGKVGFGSAAPGSKLDSSYTKSVKQIPYNISVLEINAPIIAPGILTAPAPSSAGVSNITGLLEKAGCKTFANLLVSSGVIKTFESTVEKGLTVFAPSDEAFKARGVPDLTNLTQAEVVSLLEYHALAEYKPKGSLKTNKDAISTLATNGAGKYDLTTSTSGDEVILHTGVGPSRLADTVVDETPVVIFTVDNVLLPAELFGKSSSPAPAPEPVSAPTPTPAKSPSPVEAPSPTAASPPAPPVDESSPEGAPSDSPTSSENSNAKNAAFHVNAPALFTALVTIAATSLLL</sequence>
<proteinExistence type="evidence at transcript level"/>
<organism>
    <name type="scientific">Arabidopsis thaliana</name>
    <name type="common">Mouse-ear cress</name>
    <dbReference type="NCBI Taxonomy" id="3702"/>
    <lineage>
        <taxon>Eukaryota</taxon>
        <taxon>Viridiplantae</taxon>
        <taxon>Streptophyta</taxon>
        <taxon>Embryophyta</taxon>
        <taxon>Tracheophyta</taxon>
        <taxon>Spermatophyta</taxon>
        <taxon>Magnoliopsida</taxon>
        <taxon>eudicotyledons</taxon>
        <taxon>Gunneridae</taxon>
        <taxon>Pentapetalae</taxon>
        <taxon>rosids</taxon>
        <taxon>malvids</taxon>
        <taxon>Brassicales</taxon>
        <taxon>Brassicaceae</taxon>
        <taxon>Camelineae</taxon>
        <taxon>Arabidopsis</taxon>
    </lineage>
</organism>
<keyword id="KW-1003">Cell membrane</keyword>
<keyword id="KW-0325">Glycoprotein</keyword>
<keyword id="KW-0336">GPI-anchor</keyword>
<keyword id="KW-0449">Lipoprotein</keyword>
<keyword id="KW-0472">Membrane</keyword>
<keyword id="KW-0654">Proteoglycan</keyword>
<keyword id="KW-1185">Reference proteome</keyword>
<keyword id="KW-0677">Repeat</keyword>
<keyword id="KW-0732">Signal</keyword>
<comment type="function">
    <text>May be a cell surface adhesion protein.</text>
</comment>
<comment type="subcellular location">
    <subcellularLocation>
        <location>Cell membrane</location>
        <topology>Lipid-anchor</topology>
        <topology>GPI-anchor</topology>
    </subcellularLocation>
</comment>
<comment type="similarity">
    <text evidence="4">Belongs to the fasciclin-like AGP family.</text>
</comment>
<reference key="1">
    <citation type="journal article" date="2000" name="Nature">
        <title>Sequence and analysis of chromosome 3 of the plant Arabidopsis thaliana.</title>
        <authorList>
            <person name="Salanoubat M."/>
            <person name="Lemcke K."/>
            <person name="Rieger M."/>
            <person name="Ansorge W."/>
            <person name="Unseld M."/>
            <person name="Fartmann B."/>
            <person name="Valle G."/>
            <person name="Bloecker H."/>
            <person name="Perez-Alonso M."/>
            <person name="Obermaier B."/>
            <person name="Delseny M."/>
            <person name="Boutry M."/>
            <person name="Grivell L.A."/>
            <person name="Mache R."/>
            <person name="Puigdomenech P."/>
            <person name="De Simone V."/>
            <person name="Choisne N."/>
            <person name="Artiguenave F."/>
            <person name="Robert C."/>
            <person name="Brottier P."/>
            <person name="Wincker P."/>
            <person name="Cattolico L."/>
            <person name="Weissenbach J."/>
            <person name="Saurin W."/>
            <person name="Quetier F."/>
            <person name="Schaefer M."/>
            <person name="Mueller-Auer S."/>
            <person name="Gabel C."/>
            <person name="Fuchs M."/>
            <person name="Benes V."/>
            <person name="Wurmbach E."/>
            <person name="Drzonek H."/>
            <person name="Erfle H."/>
            <person name="Jordan N."/>
            <person name="Bangert S."/>
            <person name="Wiedelmann R."/>
            <person name="Kranz H."/>
            <person name="Voss H."/>
            <person name="Holland R."/>
            <person name="Brandt P."/>
            <person name="Nyakatura G."/>
            <person name="Vezzi A."/>
            <person name="D'Angelo M."/>
            <person name="Pallavicini A."/>
            <person name="Toppo S."/>
            <person name="Simionati B."/>
            <person name="Conrad A."/>
            <person name="Hornischer K."/>
            <person name="Kauer G."/>
            <person name="Loehnert T.-H."/>
            <person name="Nordsiek G."/>
            <person name="Reichelt J."/>
            <person name="Scharfe M."/>
            <person name="Schoen O."/>
            <person name="Bargues M."/>
            <person name="Terol J."/>
            <person name="Climent J."/>
            <person name="Navarro P."/>
            <person name="Collado C."/>
            <person name="Perez-Perez A."/>
            <person name="Ottenwaelder B."/>
            <person name="Duchemin D."/>
            <person name="Cooke R."/>
            <person name="Laudie M."/>
            <person name="Berger-Llauro C."/>
            <person name="Purnelle B."/>
            <person name="Masuy D."/>
            <person name="de Haan M."/>
            <person name="Maarse A.C."/>
            <person name="Alcaraz J.-P."/>
            <person name="Cottet A."/>
            <person name="Casacuberta E."/>
            <person name="Monfort A."/>
            <person name="Argiriou A."/>
            <person name="Flores M."/>
            <person name="Liguori R."/>
            <person name="Vitale D."/>
            <person name="Mannhaupt G."/>
            <person name="Haase D."/>
            <person name="Schoof H."/>
            <person name="Rudd S."/>
            <person name="Zaccaria P."/>
            <person name="Mewes H.-W."/>
            <person name="Mayer K.F.X."/>
            <person name="Kaul S."/>
            <person name="Town C.D."/>
            <person name="Koo H.L."/>
            <person name="Tallon L.J."/>
            <person name="Jenkins J."/>
            <person name="Rooney T."/>
            <person name="Rizzo M."/>
            <person name="Walts A."/>
            <person name="Utterback T."/>
            <person name="Fujii C.Y."/>
            <person name="Shea T.P."/>
            <person name="Creasy T.H."/>
            <person name="Haas B."/>
            <person name="Maiti R."/>
            <person name="Wu D."/>
            <person name="Peterson J."/>
            <person name="Van Aken S."/>
            <person name="Pai G."/>
            <person name="Militscher J."/>
            <person name="Sellers P."/>
            <person name="Gill J.E."/>
            <person name="Feldblyum T.V."/>
            <person name="Preuss D."/>
            <person name="Lin X."/>
            <person name="Nierman W.C."/>
            <person name="Salzberg S.L."/>
            <person name="White O."/>
            <person name="Venter J.C."/>
            <person name="Fraser C.M."/>
            <person name="Kaneko T."/>
            <person name="Nakamura Y."/>
            <person name="Sato S."/>
            <person name="Kato T."/>
            <person name="Asamizu E."/>
            <person name="Sasamoto S."/>
            <person name="Kimura T."/>
            <person name="Idesawa K."/>
            <person name="Kawashima K."/>
            <person name="Kishida Y."/>
            <person name="Kiyokawa C."/>
            <person name="Kohara M."/>
            <person name="Matsumoto M."/>
            <person name="Matsuno A."/>
            <person name="Muraki A."/>
            <person name="Nakayama S."/>
            <person name="Nakazaki N."/>
            <person name="Shinpo S."/>
            <person name="Takeuchi C."/>
            <person name="Wada T."/>
            <person name="Watanabe A."/>
            <person name="Yamada M."/>
            <person name="Yasuda M."/>
            <person name="Tabata S."/>
        </authorList>
    </citation>
    <scope>NUCLEOTIDE SEQUENCE [LARGE SCALE GENOMIC DNA]</scope>
    <source>
        <strain>cv. Columbia</strain>
    </source>
</reference>
<reference key="2">
    <citation type="journal article" date="2017" name="Plant J.">
        <title>Araport11: a complete reannotation of the Arabidopsis thaliana reference genome.</title>
        <authorList>
            <person name="Cheng C.Y."/>
            <person name="Krishnakumar V."/>
            <person name="Chan A.P."/>
            <person name="Thibaud-Nissen F."/>
            <person name="Schobel S."/>
            <person name="Town C.D."/>
        </authorList>
    </citation>
    <scope>GENOME REANNOTATION</scope>
    <source>
        <strain>cv. Columbia</strain>
    </source>
</reference>
<reference key="3">
    <citation type="submission" date="2002-03" db="EMBL/GenBank/DDBJ databases">
        <title>Full-length cDNA from Arabidopsis thaliana.</title>
        <authorList>
            <person name="Brover V.V."/>
            <person name="Troukhan M.E."/>
            <person name="Alexandrov N.A."/>
            <person name="Lu Y.-P."/>
            <person name="Flavell R.B."/>
            <person name="Feldmann K.A."/>
        </authorList>
    </citation>
    <scope>NUCLEOTIDE SEQUENCE [LARGE SCALE MRNA]</scope>
</reference>
<reference key="4">
    <citation type="journal article" date="2003" name="Science">
        <title>Empirical analysis of transcriptional activity in the Arabidopsis genome.</title>
        <authorList>
            <person name="Yamada K."/>
            <person name="Lim J."/>
            <person name="Dale J.M."/>
            <person name="Chen H."/>
            <person name="Shinn P."/>
            <person name="Palm C.J."/>
            <person name="Southwick A.M."/>
            <person name="Wu H.C."/>
            <person name="Kim C.J."/>
            <person name="Nguyen M."/>
            <person name="Pham P.K."/>
            <person name="Cheuk R.F."/>
            <person name="Karlin-Newmann G."/>
            <person name="Liu S.X."/>
            <person name="Lam B."/>
            <person name="Sakano H."/>
            <person name="Wu T."/>
            <person name="Yu G."/>
            <person name="Miranda M."/>
            <person name="Quach H.L."/>
            <person name="Tripp M."/>
            <person name="Chang C.H."/>
            <person name="Lee J.M."/>
            <person name="Toriumi M.J."/>
            <person name="Chan M.M."/>
            <person name="Tang C.C."/>
            <person name="Onodera C.S."/>
            <person name="Deng J.M."/>
            <person name="Akiyama K."/>
            <person name="Ansari Y."/>
            <person name="Arakawa T."/>
            <person name="Banh J."/>
            <person name="Banno F."/>
            <person name="Bowser L."/>
            <person name="Brooks S.Y."/>
            <person name="Carninci P."/>
            <person name="Chao Q."/>
            <person name="Choy N."/>
            <person name="Enju A."/>
            <person name="Goldsmith A.D."/>
            <person name="Gurjal M."/>
            <person name="Hansen N.F."/>
            <person name="Hayashizaki Y."/>
            <person name="Johnson-Hopson C."/>
            <person name="Hsuan V.W."/>
            <person name="Iida K."/>
            <person name="Karnes M."/>
            <person name="Khan S."/>
            <person name="Koesema E."/>
            <person name="Ishida J."/>
            <person name="Jiang P.X."/>
            <person name="Jones T."/>
            <person name="Kawai J."/>
            <person name="Kamiya A."/>
            <person name="Meyers C."/>
            <person name="Nakajima M."/>
            <person name="Narusaka M."/>
            <person name="Seki M."/>
            <person name="Sakurai T."/>
            <person name="Satou M."/>
            <person name="Tamse R."/>
            <person name="Vaysberg M."/>
            <person name="Wallender E.K."/>
            <person name="Wong C."/>
            <person name="Yamamura Y."/>
            <person name="Yuan S."/>
            <person name="Shinozaki K."/>
            <person name="Davis R.W."/>
            <person name="Theologis A."/>
            <person name="Ecker J.R."/>
        </authorList>
    </citation>
    <scope>NUCLEOTIDE SEQUENCE [LARGE SCALE MRNA] OF 1-410</scope>
    <source>
        <strain>cv. Columbia</strain>
    </source>
</reference>
<reference key="5">
    <citation type="journal article" date="2003" name="Plant Physiol.">
        <title>The fasciclin-like arabinogalactan proteins of Arabidopsis. A multigene family of putative cell adhesion molecules.</title>
        <authorList>
            <person name="Johnson K.L."/>
            <person name="Jones B.J."/>
            <person name="Bacic A."/>
            <person name="Schultz C.J."/>
        </authorList>
    </citation>
    <scope>GENE FAMILY ORGANIZATION</scope>
    <scope>NOMENCLATURE</scope>
</reference>
<protein>
    <recommendedName>
        <fullName>Fasciclin-like arabinogalactan protein 10</fullName>
    </recommendedName>
</protein>